<feature type="transit peptide" description="Mitochondrion" evidence="1">
    <location>
        <begin position="1"/>
        <end position="40"/>
    </location>
</feature>
<feature type="chain" id="PRO_0000000514" description="Very long-chain specific acyl-CoA dehydrogenase, mitochondrial">
    <location>
        <begin position="41"/>
        <end position="655"/>
    </location>
</feature>
<feature type="region of interest" description="Disordered" evidence="4">
    <location>
        <begin position="22"/>
        <end position="66"/>
    </location>
</feature>
<feature type="region of interest" description="Catalytic" evidence="2">
    <location>
        <begin position="41"/>
        <end position="482"/>
    </location>
</feature>
<feature type="region of interest" description="Membrane-anchoring" evidence="2">
    <location>
        <begin position="483"/>
        <end position="516"/>
    </location>
</feature>
<feature type="compositionally biased region" description="Polar residues" evidence="4">
    <location>
        <begin position="49"/>
        <end position="59"/>
    </location>
</feature>
<feature type="active site" description="Proton acceptor" evidence="2">
    <location>
        <position position="462"/>
    </location>
</feature>
<feature type="binding site" evidence="2">
    <location>
        <begin position="214"/>
        <end position="223"/>
    </location>
    <ligand>
        <name>FAD</name>
        <dbReference type="ChEBI" id="CHEBI:57692"/>
    </ligand>
</feature>
<feature type="binding site" evidence="2">
    <location>
        <begin position="249"/>
        <end position="251"/>
    </location>
    <ligand>
        <name>FAD</name>
        <dbReference type="ChEBI" id="CHEBI:57692"/>
    </ligand>
</feature>
<feature type="binding site" evidence="2">
    <location>
        <begin position="461"/>
        <end position="463"/>
    </location>
    <ligand>
        <name>substrate</name>
    </ligand>
</feature>
<feature type="binding site" evidence="2">
    <location>
        <begin position="464"/>
        <end position="466"/>
    </location>
    <ligand>
        <name>FAD</name>
        <dbReference type="ChEBI" id="CHEBI:57692"/>
    </ligand>
</feature>
<feature type="binding site" evidence="2">
    <location>
        <position position="562"/>
    </location>
    <ligand>
        <name>FAD</name>
        <dbReference type="ChEBI" id="CHEBI:57692"/>
    </ligand>
</feature>
<feature type="modified residue" description="N6-acetyllysine; alternate" evidence="3">
    <location>
        <position position="71"/>
    </location>
</feature>
<feature type="modified residue" description="N6-succinyllysine; alternate" evidence="3">
    <location>
        <position position="71"/>
    </location>
</feature>
<feature type="modified residue" description="N6-succinyllysine" evidence="3">
    <location>
        <position position="195"/>
    </location>
</feature>
<feature type="modified residue" description="S-nitrosocysteine" evidence="3">
    <location>
        <position position="237"/>
    </location>
</feature>
<feature type="modified residue" description="N6-acetyllysine; alternate" evidence="2">
    <location>
        <position position="239"/>
    </location>
</feature>
<feature type="modified residue" description="N6-succinyllysine; alternate" evidence="3">
    <location>
        <position position="239"/>
    </location>
</feature>
<feature type="modified residue" description="N6-acetyllysine; alternate" evidence="3">
    <location>
        <position position="276"/>
    </location>
</feature>
<feature type="modified residue" description="N6-succinyllysine; alternate" evidence="3">
    <location>
        <position position="276"/>
    </location>
</feature>
<feature type="modified residue" description="N6-acetyllysine; alternate" evidence="3">
    <location>
        <position position="278"/>
    </location>
</feature>
<feature type="modified residue" description="N6-succinyllysine; alternate" evidence="3">
    <location>
        <position position="278"/>
    </location>
</feature>
<feature type="modified residue" description="N6-acetyllysine" evidence="3">
    <location>
        <position position="298"/>
    </location>
</feature>
<feature type="modified residue" description="N6-acetyllysine; alternate" evidence="2">
    <location>
        <position position="331"/>
    </location>
</feature>
<feature type="modified residue" description="N6-succinyllysine; alternate" evidence="3">
    <location>
        <position position="331"/>
    </location>
</feature>
<feature type="modified residue" description="N6-succinyllysine" evidence="3">
    <location>
        <position position="372"/>
    </location>
</feature>
<feature type="modified residue" description="N6-acetyllysine; alternate" evidence="3">
    <location>
        <position position="482"/>
    </location>
</feature>
<feature type="modified residue" description="N6-succinyllysine; alternate" evidence="3">
    <location>
        <position position="482"/>
    </location>
</feature>
<feature type="modified residue" description="Phosphoserine" evidence="2">
    <location>
        <position position="517"/>
    </location>
</feature>
<feature type="modified residue" description="Phosphoserine" evidence="2">
    <location>
        <position position="522"/>
    </location>
</feature>
<feature type="modified residue" description="N6-acetyllysine" evidence="3">
    <location>
        <position position="550"/>
    </location>
</feature>
<feature type="modified residue" description="N6-acetyllysine; alternate" evidence="3">
    <location>
        <position position="556"/>
    </location>
</feature>
<feature type="modified residue" description="N6-succinyllysine; alternate" evidence="3">
    <location>
        <position position="556"/>
    </location>
</feature>
<feature type="modified residue" description="N6-succinyllysine" evidence="3">
    <location>
        <position position="639"/>
    </location>
</feature>
<feature type="sequence conflict" description="In Ref. 1; AAA74051." evidence="5" ref="1">
    <original>R</original>
    <variation>Q</variation>
    <location>
        <position position="2"/>
    </location>
</feature>
<feature type="sequence conflict" description="In Ref. 1; AAA74051." evidence="5" ref="1">
    <original>AQ</original>
    <variation>TA</variation>
    <location>
        <begin position="7"/>
        <end position="8"/>
    </location>
</feature>
<feature type="sequence conflict" description="In Ref. 1; AAA74051." evidence="5" ref="1">
    <original>T</original>
    <variation>L</variation>
    <location>
        <position position="10"/>
    </location>
</feature>
<feature type="sequence conflict" description="In Ref. 1; AAA74051." evidence="5" ref="1">
    <original>Q</original>
    <variation>T</variation>
    <location>
        <position position="13"/>
    </location>
</feature>
<feature type="sequence conflict" description="In Ref. 1; AAA74051." evidence="5" ref="1">
    <original>R</original>
    <variation>P</variation>
    <location>
        <position position="37"/>
    </location>
</feature>
<dbReference type="EC" id="1.3.8.9" evidence="2"/>
<dbReference type="EMBL" id="U30817">
    <property type="protein sequence ID" value="AAA74051.1"/>
    <property type="molecule type" value="mRNA"/>
</dbReference>
<dbReference type="EMBL" id="BT030546">
    <property type="protein sequence ID" value="ABQ12986.1"/>
    <property type="molecule type" value="mRNA"/>
</dbReference>
<dbReference type="EMBL" id="BC103104">
    <property type="protein sequence ID" value="AAI03105.1"/>
    <property type="molecule type" value="mRNA"/>
</dbReference>
<dbReference type="RefSeq" id="NP_776919.1">
    <property type="nucleotide sequence ID" value="NM_174494.2"/>
</dbReference>
<dbReference type="SMR" id="P48818"/>
<dbReference type="FunCoup" id="P48818">
    <property type="interactions" value="1310"/>
</dbReference>
<dbReference type="IntAct" id="P48818">
    <property type="interactions" value="35"/>
</dbReference>
<dbReference type="STRING" id="9913.ENSBTAP00000003999"/>
<dbReference type="PaxDb" id="9913-ENSBTAP00000003999"/>
<dbReference type="PeptideAtlas" id="P48818"/>
<dbReference type="GeneID" id="282130"/>
<dbReference type="KEGG" id="bta:282130"/>
<dbReference type="CTD" id="37"/>
<dbReference type="VEuPathDB" id="HostDB:ENSBTAG00000003072"/>
<dbReference type="eggNOG" id="KOG0137">
    <property type="taxonomic scope" value="Eukaryota"/>
</dbReference>
<dbReference type="HOGENOM" id="CLU_018204_11_2_1"/>
<dbReference type="InParanoid" id="P48818"/>
<dbReference type="OMA" id="NAFMGLR"/>
<dbReference type="OrthoDB" id="2588832at2759"/>
<dbReference type="TreeFam" id="TF105053"/>
<dbReference type="Reactome" id="R-BTA-77305">
    <property type="pathway name" value="Beta oxidation of palmitoyl-CoA to myristoyl-CoA"/>
</dbReference>
<dbReference type="UniPathway" id="UPA00660"/>
<dbReference type="Proteomes" id="UP000009136">
    <property type="component" value="Chromosome 19"/>
</dbReference>
<dbReference type="Bgee" id="ENSBTAG00000003072">
    <property type="expression patterns" value="Expressed in corpus luteum and 105 other cell types or tissues"/>
</dbReference>
<dbReference type="GO" id="GO:0005743">
    <property type="term" value="C:mitochondrial inner membrane"/>
    <property type="evidence" value="ECO:0007669"/>
    <property type="project" value="UniProtKB-SubCell"/>
</dbReference>
<dbReference type="GO" id="GO:0003995">
    <property type="term" value="F:acyl-CoA dehydrogenase activity"/>
    <property type="evidence" value="ECO:0000250"/>
    <property type="project" value="UniProtKB"/>
</dbReference>
<dbReference type="GO" id="GO:0000062">
    <property type="term" value="F:fatty-acyl-CoA binding"/>
    <property type="evidence" value="ECO:0000318"/>
    <property type="project" value="GO_Central"/>
</dbReference>
<dbReference type="GO" id="GO:0050660">
    <property type="term" value="F:flavin adenine dinucleotide binding"/>
    <property type="evidence" value="ECO:0000250"/>
    <property type="project" value="UniProtKB"/>
</dbReference>
<dbReference type="GO" id="GO:0042802">
    <property type="term" value="F:identical protein binding"/>
    <property type="evidence" value="ECO:0000250"/>
    <property type="project" value="UniProtKB"/>
</dbReference>
<dbReference type="GO" id="GO:0017099">
    <property type="term" value="F:very-long-chain fatty acyl-CoA dehydrogenase activity"/>
    <property type="evidence" value="ECO:0000250"/>
    <property type="project" value="UniProtKB"/>
</dbReference>
<dbReference type="GO" id="GO:0033539">
    <property type="term" value="P:fatty acid beta-oxidation using acyl-CoA dehydrogenase"/>
    <property type="evidence" value="ECO:0000250"/>
    <property type="project" value="UniProtKB"/>
</dbReference>
<dbReference type="CDD" id="cd01161">
    <property type="entry name" value="VLCAD"/>
    <property type="match status" value="1"/>
</dbReference>
<dbReference type="FunFam" id="1.20.140.10:FF:000008">
    <property type="entry name" value="acyl-CoA dehydrogenase family member 9, mitochondrial"/>
    <property type="match status" value="1"/>
</dbReference>
<dbReference type="FunFam" id="1.20.140.10:FF:000017">
    <property type="entry name" value="very long-chain specific acyl-CoA dehydrogenase, mitochondrial"/>
    <property type="match status" value="1"/>
</dbReference>
<dbReference type="FunFam" id="2.40.110.10:FF:000006">
    <property type="entry name" value="very long-chain specific acyl-CoA dehydrogenase, mitochondrial"/>
    <property type="match status" value="1"/>
</dbReference>
<dbReference type="FunFam" id="1.10.540.10:FF:000001">
    <property type="entry name" value="Very long-chain-specific acyl-CoA dehydrogenase, mitochondrial"/>
    <property type="match status" value="1"/>
</dbReference>
<dbReference type="Gene3D" id="1.10.540.10">
    <property type="entry name" value="Acyl-CoA dehydrogenase/oxidase, N-terminal domain"/>
    <property type="match status" value="1"/>
</dbReference>
<dbReference type="Gene3D" id="2.40.110.10">
    <property type="entry name" value="Butyryl-CoA Dehydrogenase, subunit A, domain 2"/>
    <property type="match status" value="1"/>
</dbReference>
<dbReference type="Gene3D" id="1.20.140.10">
    <property type="entry name" value="Butyryl-CoA Dehydrogenase, subunit A, domain 3"/>
    <property type="match status" value="2"/>
</dbReference>
<dbReference type="InterPro" id="IPR049448">
    <property type="entry name" value="ACAD9/ACADV-like_C"/>
</dbReference>
<dbReference type="InterPro" id="IPR006089">
    <property type="entry name" value="Acyl-CoA_DH_CS"/>
</dbReference>
<dbReference type="InterPro" id="IPR006091">
    <property type="entry name" value="Acyl-CoA_Oxase/DH_mid-dom"/>
</dbReference>
<dbReference type="InterPro" id="IPR046373">
    <property type="entry name" value="Acyl-CoA_Oxase/DH_mid-dom_sf"/>
</dbReference>
<dbReference type="InterPro" id="IPR036250">
    <property type="entry name" value="AcylCo_DH-like_C"/>
</dbReference>
<dbReference type="InterPro" id="IPR009075">
    <property type="entry name" value="AcylCo_DH/oxidase_C"/>
</dbReference>
<dbReference type="InterPro" id="IPR013786">
    <property type="entry name" value="AcylCoA_DH/ox_N"/>
</dbReference>
<dbReference type="InterPro" id="IPR037069">
    <property type="entry name" value="AcylCoA_DH/ox_N_sf"/>
</dbReference>
<dbReference type="InterPro" id="IPR009100">
    <property type="entry name" value="AcylCoA_DH/oxidase_NM_dom_sf"/>
</dbReference>
<dbReference type="PANTHER" id="PTHR43884">
    <property type="entry name" value="ACYL-COA DEHYDROGENASE"/>
    <property type="match status" value="1"/>
</dbReference>
<dbReference type="PANTHER" id="PTHR43884:SF11">
    <property type="entry name" value="VERY LONG-CHAIN SPECIFIC ACYL-COA DEHYDROGENASE, MITOCHONDRIAL"/>
    <property type="match status" value="1"/>
</dbReference>
<dbReference type="Pfam" id="PF21343">
    <property type="entry name" value="ACAD9-ACADV_C"/>
    <property type="match status" value="1"/>
</dbReference>
<dbReference type="Pfam" id="PF00441">
    <property type="entry name" value="Acyl-CoA_dh_1"/>
    <property type="match status" value="1"/>
</dbReference>
<dbReference type="Pfam" id="PF02770">
    <property type="entry name" value="Acyl-CoA_dh_M"/>
    <property type="match status" value="1"/>
</dbReference>
<dbReference type="Pfam" id="PF02771">
    <property type="entry name" value="Acyl-CoA_dh_N"/>
    <property type="match status" value="1"/>
</dbReference>
<dbReference type="SUPFAM" id="SSF47203">
    <property type="entry name" value="Acyl-CoA dehydrogenase C-terminal domain-like"/>
    <property type="match status" value="2"/>
</dbReference>
<dbReference type="SUPFAM" id="SSF56645">
    <property type="entry name" value="Acyl-CoA dehydrogenase NM domain-like"/>
    <property type="match status" value="1"/>
</dbReference>
<dbReference type="PROSITE" id="PS00072">
    <property type="entry name" value="ACYL_COA_DH_1"/>
    <property type="match status" value="1"/>
</dbReference>
<dbReference type="PROSITE" id="PS00073">
    <property type="entry name" value="ACYL_COA_DH_2"/>
    <property type="match status" value="1"/>
</dbReference>
<evidence type="ECO:0000250" key="1"/>
<evidence type="ECO:0000250" key="2">
    <source>
        <dbReference type="UniProtKB" id="P49748"/>
    </source>
</evidence>
<evidence type="ECO:0000250" key="3">
    <source>
        <dbReference type="UniProtKB" id="P50544"/>
    </source>
</evidence>
<evidence type="ECO:0000256" key="4">
    <source>
        <dbReference type="SAM" id="MobiDB-lite"/>
    </source>
</evidence>
<evidence type="ECO:0000305" key="5"/>
<organism>
    <name type="scientific">Bos taurus</name>
    <name type="common">Bovine</name>
    <dbReference type="NCBI Taxonomy" id="9913"/>
    <lineage>
        <taxon>Eukaryota</taxon>
        <taxon>Metazoa</taxon>
        <taxon>Chordata</taxon>
        <taxon>Craniata</taxon>
        <taxon>Vertebrata</taxon>
        <taxon>Euteleostomi</taxon>
        <taxon>Mammalia</taxon>
        <taxon>Eutheria</taxon>
        <taxon>Laurasiatheria</taxon>
        <taxon>Artiodactyla</taxon>
        <taxon>Ruminantia</taxon>
        <taxon>Pecora</taxon>
        <taxon>Bovidae</taxon>
        <taxon>Bovinae</taxon>
        <taxon>Bos</taxon>
    </lineage>
</organism>
<keyword id="KW-0007">Acetylation</keyword>
<keyword id="KW-0274">FAD</keyword>
<keyword id="KW-0276">Fatty acid metabolism</keyword>
<keyword id="KW-0285">Flavoprotein</keyword>
<keyword id="KW-0443">Lipid metabolism</keyword>
<keyword id="KW-0472">Membrane</keyword>
<keyword id="KW-0496">Mitochondrion</keyword>
<keyword id="KW-0999">Mitochondrion inner membrane</keyword>
<keyword id="KW-0560">Oxidoreductase</keyword>
<keyword id="KW-0597">Phosphoprotein</keyword>
<keyword id="KW-1185">Reference proteome</keyword>
<keyword id="KW-0702">S-nitrosylation</keyword>
<keyword id="KW-0809">Transit peptide</keyword>
<comment type="function">
    <text evidence="2">Very long-chain specific acyl-CoA dehydrogenase is one of the acyl-CoA dehydrogenases that catalyze the first step of mitochondrial fatty acid beta-oxidation, an aerobic process breaking down fatty acids into acetyl-CoA and allowing the production of energy from fats. The first step of fatty acid beta-oxidation consists in the removal of one hydrogen from C-2 and C-3 of the straight-chain fatty acyl-CoA thioester, resulting in the formation of trans-2-enoyl-CoA. Among the different mitochondrial acyl-CoA dehydrogenases, very long-chain specific acyl-CoA dehydrogenase acts specifically on acyl-CoAs with saturated 12 to 24 carbons long primary chains.</text>
</comment>
<comment type="catalytic activity">
    <reaction evidence="2">
        <text>a very-long-chain 2,3-saturated fatty acyl-CoA + oxidized [electron-transfer flavoprotein] + H(+) = a very-long-chain (2E)-enoyl-CoA + reduced [electron-transfer flavoprotein]</text>
        <dbReference type="Rhea" id="RHEA:19181"/>
        <dbReference type="Rhea" id="RHEA-COMP:10685"/>
        <dbReference type="Rhea" id="RHEA-COMP:10686"/>
        <dbReference type="ChEBI" id="CHEBI:15378"/>
        <dbReference type="ChEBI" id="CHEBI:57692"/>
        <dbReference type="ChEBI" id="CHEBI:58307"/>
        <dbReference type="ChEBI" id="CHEBI:83724"/>
        <dbReference type="ChEBI" id="CHEBI:83728"/>
        <dbReference type="EC" id="1.3.8.9"/>
    </reaction>
    <physiologicalReaction direction="left-to-right" evidence="2">
        <dbReference type="Rhea" id="RHEA:19182"/>
    </physiologicalReaction>
</comment>
<comment type="catalytic activity">
    <reaction evidence="2">
        <text>dodecanoyl-CoA + oxidized [electron-transfer flavoprotein] + H(+) = (2E)-dodecenoyl-CoA + reduced [electron-transfer flavoprotein]</text>
        <dbReference type="Rhea" id="RHEA:47296"/>
        <dbReference type="Rhea" id="RHEA-COMP:10685"/>
        <dbReference type="Rhea" id="RHEA-COMP:10686"/>
        <dbReference type="ChEBI" id="CHEBI:15378"/>
        <dbReference type="ChEBI" id="CHEBI:57330"/>
        <dbReference type="ChEBI" id="CHEBI:57375"/>
        <dbReference type="ChEBI" id="CHEBI:57692"/>
        <dbReference type="ChEBI" id="CHEBI:58307"/>
    </reaction>
    <physiologicalReaction direction="left-to-right" evidence="2">
        <dbReference type="Rhea" id="RHEA:47297"/>
    </physiologicalReaction>
</comment>
<comment type="catalytic activity">
    <reaction evidence="2">
        <text>tetradecanoyl-CoA + oxidized [electron-transfer flavoprotein] + H(+) = (2E)-tetradecenoyl-CoA + reduced [electron-transfer flavoprotein]</text>
        <dbReference type="Rhea" id="RHEA:47316"/>
        <dbReference type="Rhea" id="RHEA-COMP:10685"/>
        <dbReference type="Rhea" id="RHEA-COMP:10686"/>
        <dbReference type="ChEBI" id="CHEBI:15378"/>
        <dbReference type="ChEBI" id="CHEBI:57385"/>
        <dbReference type="ChEBI" id="CHEBI:57692"/>
        <dbReference type="ChEBI" id="CHEBI:58307"/>
        <dbReference type="ChEBI" id="CHEBI:61405"/>
    </reaction>
    <physiologicalReaction direction="left-to-right" evidence="2">
        <dbReference type="Rhea" id="RHEA:47317"/>
    </physiologicalReaction>
</comment>
<comment type="catalytic activity">
    <reaction evidence="2">
        <text>oxidized [electron-transfer flavoprotein] + hexadecanoyl-CoA + H(+) = (2E)-hexadecenoyl-CoA + reduced [electron-transfer flavoprotein]</text>
        <dbReference type="Rhea" id="RHEA:43448"/>
        <dbReference type="Rhea" id="RHEA-COMP:10685"/>
        <dbReference type="Rhea" id="RHEA-COMP:10686"/>
        <dbReference type="ChEBI" id="CHEBI:15378"/>
        <dbReference type="ChEBI" id="CHEBI:57379"/>
        <dbReference type="ChEBI" id="CHEBI:57692"/>
        <dbReference type="ChEBI" id="CHEBI:58307"/>
        <dbReference type="ChEBI" id="CHEBI:61526"/>
    </reaction>
    <physiologicalReaction direction="left-to-right" evidence="2">
        <dbReference type="Rhea" id="RHEA:43449"/>
    </physiologicalReaction>
</comment>
<comment type="catalytic activity">
    <reaction evidence="2">
        <text>octadecanoyl-CoA + oxidized [electron-transfer flavoprotein] + H(+) = (2E)-octadecenoyl-CoA + reduced [electron-transfer flavoprotein]</text>
        <dbReference type="Rhea" id="RHEA:47240"/>
        <dbReference type="Rhea" id="RHEA-COMP:10685"/>
        <dbReference type="Rhea" id="RHEA-COMP:10686"/>
        <dbReference type="ChEBI" id="CHEBI:15378"/>
        <dbReference type="ChEBI" id="CHEBI:57394"/>
        <dbReference type="ChEBI" id="CHEBI:57692"/>
        <dbReference type="ChEBI" id="CHEBI:58307"/>
        <dbReference type="ChEBI" id="CHEBI:71412"/>
    </reaction>
    <physiologicalReaction direction="left-to-right" evidence="2">
        <dbReference type="Rhea" id="RHEA:47241"/>
    </physiologicalReaction>
</comment>
<comment type="catalytic activity">
    <reaction evidence="2">
        <text>eicosanoyl-CoA + oxidized [electron-transfer flavoprotein] + H(+) = (2E)-eicosenoyl-CoA + reduced [electron-transfer flavoprotein]</text>
        <dbReference type="Rhea" id="RHEA:47236"/>
        <dbReference type="Rhea" id="RHEA-COMP:10685"/>
        <dbReference type="Rhea" id="RHEA-COMP:10686"/>
        <dbReference type="ChEBI" id="CHEBI:15378"/>
        <dbReference type="ChEBI" id="CHEBI:57380"/>
        <dbReference type="ChEBI" id="CHEBI:57692"/>
        <dbReference type="ChEBI" id="CHEBI:58307"/>
        <dbReference type="ChEBI" id="CHEBI:74691"/>
    </reaction>
    <physiologicalReaction direction="left-to-right" evidence="2">
        <dbReference type="Rhea" id="RHEA:47237"/>
    </physiologicalReaction>
</comment>
<comment type="catalytic activity">
    <reaction evidence="2">
        <text>docosanoyl-CoA + oxidized [electron-transfer flavoprotein] + H(+) = (2E)-docosenoyl-CoA + reduced [electron-transfer flavoprotein]</text>
        <dbReference type="Rhea" id="RHEA:47228"/>
        <dbReference type="Rhea" id="RHEA-COMP:10685"/>
        <dbReference type="Rhea" id="RHEA-COMP:10686"/>
        <dbReference type="ChEBI" id="CHEBI:15378"/>
        <dbReference type="ChEBI" id="CHEBI:57692"/>
        <dbReference type="ChEBI" id="CHEBI:58307"/>
        <dbReference type="ChEBI" id="CHEBI:65059"/>
        <dbReference type="ChEBI" id="CHEBI:74692"/>
    </reaction>
    <physiologicalReaction direction="left-to-right" evidence="2">
        <dbReference type="Rhea" id="RHEA:47229"/>
    </physiologicalReaction>
</comment>
<comment type="catalytic activity">
    <reaction evidence="2">
        <text>tetracosanoyl-CoA + oxidized [electron-transfer flavoprotein] + H(+) = (2E)-tetracosenoyl-CoA + reduced [electron-transfer flavoprotein]</text>
        <dbReference type="Rhea" id="RHEA:47232"/>
        <dbReference type="Rhea" id="RHEA-COMP:10685"/>
        <dbReference type="Rhea" id="RHEA-COMP:10686"/>
        <dbReference type="ChEBI" id="CHEBI:15378"/>
        <dbReference type="ChEBI" id="CHEBI:57692"/>
        <dbReference type="ChEBI" id="CHEBI:58307"/>
        <dbReference type="ChEBI" id="CHEBI:65052"/>
        <dbReference type="ChEBI" id="CHEBI:74693"/>
    </reaction>
    <physiologicalReaction direction="left-to-right" evidence="2">
        <dbReference type="Rhea" id="RHEA:47233"/>
    </physiologicalReaction>
</comment>
<comment type="cofactor">
    <cofactor evidence="2">
        <name>FAD</name>
        <dbReference type="ChEBI" id="CHEBI:57692"/>
    </cofactor>
</comment>
<comment type="pathway">
    <text evidence="2">Lipid metabolism; mitochondrial fatty acid beta-oxidation.</text>
</comment>
<comment type="subunit">
    <text evidence="2">Homodimer. Homodimerizes after import into the mitochondrion.</text>
</comment>
<comment type="subcellular location">
    <subcellularLocation>
        <location evidence="2">Mitochondrion inner membrane</location>
        <topology evidence="2">Peripheral membrane protein</topology>
    </subcellularLocation>
</comment>
<comment type="PTM">
    <text evidence="3">S-nitrosylation at Cys-237 in liver improves catalytic efficiency.</text>
</comment>
<comment type="similarity">
    <text evidence="5">Belongs to the acyl-CoA dehydrogenase family.</text>
</comment>
<protein>
    <recommendedName>
        <fullName evidence="5">Very long-chain specific acyl-CoA dehydrogenase, mitochondrial</fullName>
        <shortName evidence="5">VLCAD</shortName>
        <ecNumber evidence="2">1.3.8.9</ecNumber>
    </recommendedName>
</protein>
<accession>P48818</accession>
<accession>A5D9C7</accession>
<accession>Q3SZ66</accession>
<reference key="1">
    <citation type="submission" date="1995-06" db="EMBL/GenBank/DDBJ databases">
        <title>The molecular cloning and the nucleotide sequence of cDNA encoding the precursor of the mitochondrial very-long-chain acyl-CoA dehydrogenase from bovine heart.</title>
        <authorList>
            <person name="Zhang X."/>
            <person name="Liu W."/>
            <person name="Zhu H."/>
            <person name="Sun X."/>
        </authorList>
    </citation>
    <scope>NUCLEOTIDE SEQUENCE [MRNA]</scope>
    <source>
        <tissue>Heart</tissue>
    </source>
</reference>
<reference key="2">
    <citation type="journal article" date="2005" name="BMC Genomics">
        <title>Characterization of 954 bovine full-CDS cDNA sequences.</title>
        <authorList>
            <person name="Harhay G.P."/>
            <person name="Sonstegard T.S."/>
            <person name="Keele J.W."/>
            <person name="Heaton M.P."/>
            <person name="Clawson M.L."/>
            <person name="Snelling W.M."/>
            <person name="Wiedmann R.T."/>
            <person name="Van Tassell C.P."/>
            <person name="Smith T.P.L."/>
        </authorList>
    </citation>
    <scope>NUCLEOTIDE SEQUENCE [LARGE SCALE MRNA]</scope>
</reference>
<reference key="3">
    <citation type="submission" date="2005-08" db="EMBL/GenBank/DDBJ databases">
        <authorList>
            <consortium name="NIH - Mammalian Gene Collection (MGC) project"/>
        </authorList>
    </citation>
    <scope>NUCLEOTIDE SEQUENCE [LARGE SCALE MRNA]</scope>
    <source>
        <strain>Hereford</strain>
        <tissue>Heart ventricle</tissue>
    </source>
</reference>
<gene>
    <name evidence="2" type="primary">ACADVL</name>
    <name type="synonym">VLCAD</name>
</gene>
<name>ACADV_BOVIN</name>
<sequence length="655" mass="70649">MRAARMAQSTGRQLLRLRGVSSWPGELLGQPRPGPARRPYASGVAQAAVDQSDSQPSEASTREKRANSVSKSFAVGTFKGQLTTDQVFPYPSVLNEDQTQFLKELVGPVTRFFEEVNDAAKNDMLERVEETTMQGLKELGAFGLQVPNELGGVGLCNTQYARLVEIVGMYDLGVGIVLGAHQSIGFKGILLFGTKAQKEKYLPKLASGETIAAFCLTEPSSGSDAASIRSSAVPSPCGKYYTLNGSKIWISNGGLADIFTVFAKTPVTDTATGAVKEKITAFVVERSFGGVTHGPPEKKMGIKASNTAEVYFDGVRVPAENVLGEVGGGFKVAMHILNNGRFGMAAALAGTMKGIIAKAVDHAANRTQFGEKIHNFGLIQEKLARMAMLQYVTESMAYMVSANMDQGSTDFQIEAAISKIFGSEAAWKVTDECIQIMGGMGFMKEPGVERVLRDLRIFRIFEGTNDILRLFVALQGCMDKGKELSGLGNALKNPFGNAGLLLGEAGKQLRRRAGLGSGLSLSGIVHQELSRSGELAVQALEQFATVVEAKLIKHKKDIINEQFLLQRLADSAIDLYAMVVVLSRASRSLSEGHPTAQHEKMLCDSWCIEAAARIRENMTALQSDPQQQELFRNFKSISKALVERGGVVTSNPLGF</sequence>
<proteinExistence type="evidence at transcript level"/>